<organism>
    <name type="scientific">Buchnera aphidicola subsp. Baizongia pistaciae (strain Bp)</name>
    <dbReference type="NCBI Taxonomy" id="224915"/>
    <lineage>
        <taxon>Bacteria</taxon>
        <taxon>Pseudomonadati</taxon>
        <taxon>Pseudomonadota</taxon>
        <taxon>Gammaproteobacteria</taxon>
        <taxon>Enterobacterales</taxon>
        <taxon>Erwiniaceae</taxon>
        <taxon>Buchnera</taxon>
    </lineage>
</organism>
<evidence type="ECO:0000250" key="1"/>
<evidence type="ECO:0000255" key="2"/>
<evidence type="ECO:0000305" key="3"/>
<gene>
    <name type="primary">flhA</name>
    <name type="ordered locus">bbp_223</name>
</gene>
<keyword id="KW-1005">Bacterial flagellum biogenesis</keyword>
<keyword id="KW-1006">Bacterial flagellum protein export</keyword>
<keyword id="KW-1003">Cell membrane</keyword>
<keyword id="KW-0472">Membrane</keyword>
<keyword id="KW-0653">Protein transport</keyword>
<keyword id="KW-1185">Reference proteome</keyword>
<keyword id="KW-0812">Transmembrane</keyword>
<keyword id="KW-1133">Transmembrane helix</keyword>
<keyword id="KW-0813">Transport</keyword>
<dbReference type="EMBL" id="AE016826">
    <property type="protein sequence ID" value="AAO26954.1"/>
    <property type="molecule type" value="Genomic_DNA"/>
</dbReference>
<dbReference type="RefSeq" id="WP_011091355.1">
    <property type="nucleotide sequence ID" value="NC_004545.1"/>
</dbReference>
<dbReference type="SMR" id="Q89AN5"/>
<dbReference type="STRING" id="224915.bbp_223"/>
<dbReference type="KEGG" id="bab:bbp_223"/>
<dbReference type="eggNOG" id="COG1298">
    <property type="taxonomic scope" value="Bacteria"/>
</dbReference>
<dbReference type="HOGENOM" id="CLU_015346_3_0_6"/>
<dbReference type="OrthoDB" id="9759185at2"/>
<dbReference type="Proteomes" id="UP000000601">
    <property type="component" value="Chromosome"/>
</dbReference>
<dbReference type="GO" id="GO:0005886">
    <property type="term" value="C:plasma membrane"/>
    <property type="evidence" value="ECO:0007669"/>
    <property type="project" value="UniProtKB-SubCell"/>
</dbReference>
<dbReference type="GO" id="GO:0044780">
    <property type="term" value="P:bacterial-type flagellum assembly"/>
    <property type="evidence" value="ECO:0007669"/>
    <property type="project" value="InterPro"/>
</dbReference>
<dbReference type="GO" id="GO:0009306">
    <property type="term" value="P:protein secretion"/>
    <property type="evidence" value="ECO:0007669"/>
    <property type="project" value="InterPro"/>
</dbReference>
<dbReference type="Gene3D" id="3.40.30.60">
    <property type="entry name" value="FHIPEP family, domain 1"/>
    <property type="match status" value="1"/>
</dbReference>
<dbReference type="Gene3D" id="1.10.8.540">
    <property type="entry name" value="FHIPEP family, domain 3"/>
    <property type="match status" value="1"/>
</dbReference>
<dbReference type="Gene3D" id="3.40.50.12790">
    <property type="entry name" value="FHIPEP family, domain 4"/>
    <property type="match status" value="1"/>
</dbReference>
<dbReference type="InterPro" id="IPR042194">
    <property type="entry name" value="FHIPEP_1"/>
</dbReference>
<dbReference type="InterPro" id="IPR042193">
    <property type="entry name" value="FHIPEP_3"/>
</dbReference>
<dbReference type="InterPro" id="IPR042196">
    <property type="entry name" value="FHIPEP_4"/>
</dbReference>
<dbReference type="InterPro" id="IPR025505">
    <property type="entry name" value="FHIPEP_CS"/>
</dbReference>
<dbReference type="InterPro" id="IPR006301">
    <property type="entry name" value="FlhA"/>
</dbReference>
<dbReference type="InterPro" id="IPR001712">
    <property type="entry name" value="T3SS_FHIPEP"/>
</dbReference>
<dbReference type="NCBIfam" id="TIGR01398">
    <property type="entry name" value="FlhA"/>
    <property type="match status" value="1"/>
</dbReference>
<dbReference type="PANTHER" id="PTHR30161:SF1">
    <property type="entry name" value="FLAGELLAR BIOSYNTHESIS PROTEIN FLHA-RELATED"/>
    <property type="match status" value="1"/>
</dbReference>
<dbReference type="PANTHER" id="PTHR30161">
    <property type="entry name" value="FLAGELLAR EXPORT PROTEIN, MEMBRANE FLHA SUBUNIT-RELATED"/>
    <property type="match status" value="1"/>
</dbReference>
<dbReference type="Pfam" id="PF00771">
    <property type="entry name" value="FHIPEP"/>
    <property type="match status" value="1"/>
</dbReference>
<dbReference type="PIRSF" id="PIRSF005419">
    <property type="entry name" value="FlhA"/>
    <property type="match status" value="1"/>
</dbReference>
<dbReference type="PRINTS" id="PR00949">
    <property type="entry name" value="TYPE3IMAPROT"/>
</dbReference>
<dbReference type="PROSITE" id="PS00994">
    <property type="entry name" value="FHIPEP"/>
    <property type="match status" value="1"/>
</dbReference>
<proteinExistence type="inferred from homology"/>
<comment type="function">
    <text evidence="1">Required for formation of the rod structure of the flagellar apparatus. Together with FliI and FliH, may constitute the export apparatus of flagellin (By similarity).</text>
</comment>
<comment type="subcellular location">
    <subcellularLocation>
        <location evidence="1">Cell membrane</location>
        <topology evidence="1">Multi-pass membrane protein</topology>
    </subcellularLocation>
</comment>
<comment type="similarity">
    <text evidence="3">Belongs to the FHIPEP (flagella/HR/invasion proteins export pore) family.</text>
</comment>
<protein>
    <recommendedName>
        <fullName>Flagellar biosynthesis protein FlhA</fullName>
    </recommendedName>
</protein>
<name>FLHA_BUCBP</name>
<feature type="chain" id="PRO_0000190014" description="Flagellar biosynthesis protein FlhA">
    <location>
        <begin position="1"/>
        <end position="702"/>
    </location>
</feature>
<feature type="transmembrane region" description="Helical" evidence="2">
    <location>
        <begin position="21"/>
        <end position="43"/>
    </location>
</feature>
<feature type="transmembrane region" description="Helical" evidence="2">
    <location>
        <begin position="47"/>
        <end position="64"/>
    </location>
</feature>
<feature type="transmembrane region" description="Helical" evidence="2">
    <location>
        <begin position="76"/>
        <end position="98"/>
    </location>
</feature>
<feature type="transmembrane region" description="Helical" evidence="2">
    <location>
        <begin position="118"/>
        <end position="140"/>
    </location>
</feature>
<feature type="transmembrane region" description="Helical" evidence="2">
    <location>
        <begin position="209"/>
        <end position="231"/>
    </location>
</feature>
<feature type="transmembrane region" description="Helical" evidence="2">
    <location>
        <begin position="251"/>
        <end position="273"/>
    </location>
</feature>
<feature type="transmembrane region" description="Helical" evidence="2">
    <location>
        <begin position="285"/>
        <end position="307"/>
    </location>
</feature>
<feature type="transmembrane region" description="Helical" evidence="2">
    <location>
        <begin position="311"/>
        <end position="333"/>
    </location>
</feature>
<sequence>MANILSIFKTFEIKRLVKFQTLSGPVLILIILSMMVLPLAPFILDLFFTFNIALSIVVLLMSMFTTKTLEFTSFPTILLFSTLLRLALNIASTRIILLNGHIGSCSAGNVIQAFGHFLVGGNFTIGIIVFIILIIINFMVITKGASRIAEVGARFTLDGMPGKQMAIDADLNAGLIGEKQAKKRRIEINQEADFYGSMDGASKFVRGDAIAGILIMIVNIIGGLVIGILQHNMTFSQAAQVYTILTIGDGLVAQIPALVVSTASGVIVTRVSTDQNVSEQIVSQLFCNPQVILLSGIVLGVLGLVPGMPNIIFLIFTTLLFFISWLIYRNPVIFTNFESTMKKIDNTNFCNISDASWNDVQLEGSISIELGNLLIPMIKVNSKKSNLLDKIRNVRKKCAKNIGFLPPLVHIRDNNNLPGNCYCILIKGIEISKGTVQCGKFLAINSGNASGPLPLPAEETSDPIFKFKSFWITSELINQAKQKGYNIAEDSTVISTHLNHIILTHISLLFGRQEAQQLLDYVSKFCPKLIEDLIPNSINLTIFHQVLQNLLIENVPIRDMQTILETLITHAPNYQNDSQILTSLVRISLGKLIIQNIFQNNKIEVIKFDSKLEQILLKTIANKDSVLEPGLYNYIVVKLQQEYNNCKLKNIPCVLLVHHNLRVFIAKMLLKNIPKIFVLSNLELEDVTKIYTTNIIGDQTKT</sequence>
<accession>Q89AN5</accession>
<reference key="1">
    <citation type="journal article" date="2003" name="Proc. Natl. Acad. Sci. U.S.A.">
        <title>Reductive genome evolution in Buchnera aphidicola.</title>
        <authorList>
            <person name="van Ham R.C.H.J."/>
            <person name="Kamerbeek J."/>
            <person name="Palacios C."/>
            <person name="Rausell C."/>
            <person name="Abascal F."/>
            <person name="Bastolla U."/>
            <person name="Fernandez J.M."/>
            <person name="Jimenez L."/>
            <person name="Postigo M."/>
            <person name="Silva F.J."/>
            <person name="Tamames J."/>
            <person name="Viguera E."/>
            <person name="Latorre A."/>
            <person name="Valencia A."/>
            <person name="Moran F."/>
            <person name="Moya A."/>
        </authorList>
    </citation>
    <scope>NUCLEOTIDE SEQUENCE [LARGE SCALE GENOMIC DNA]</scope>
    <source>
        <strain>Bp</strain>
    </source>
</reference>